<dbReference type="EMBL" id="CP000703">
    <property type="protein sequence ID" value="ABQ49122.1"/>
    <property type="molecule type" value="Genomic_DNA"/>
</dbReference>
<dbReference type="RefSeq" id="WP_000036633.1">
    <property type="nucleotide sequence ID" value="NC_009487.1"/>
</dbReference>
<dbReference type="SMR" id="A5ISE9"/>
<dbReference type="KEGG" id="saj:SaurJH9_1325"/>
<dbReference type="HOGENOM" id="CLU_070525_2_0_9"/>
<dbReference type="GO" id="GO:0005829">
    <property type="term" value="C:cytosol"/>
    <property type="evidence" value="ECO:0007669"/>
    <property type="project" value="TreeGrafter"/>
</dbReference>
<dbReference type="GO" id="GO:0000028">
    <property type="term" value="P:ribosomal small subunit assembly"/>
    <property type="evidence" value="ECO:0007669"/>
    <property type="project" value="TreeGrafter"/>
</dbReference>
<dbReference type="GO" id="GO:0006412">
    <property type="term" value="P:translation"/>
    <property type="evidence" value="ECO:0007669"/>
    <property type="project" value="TreeGrafter"/>
</dbReference>
<dbReference type="CDD" id="cd01734">
    <property type="entry name" value="YlxS_C"/>
    <property type="match status" value="1"/>
</dbReference>
<dbReference type="FunFam" id="3.30.300.70:FF:000001">
    <property type="entry name" value="Ribosome maturation factor RimP"/>
    <property type="match status" value="1"/>
</dbReference>
<dbReference type="Gene3D" id="2.30.30.180">
    <property type="entry name" value="Ribosome maturation factor RimP, C-terminal domain"/>
    <property type="match status" value="1"/>
</dbReference>
<dbReference type="Gene3D" id="3.30.300.70">
    <property type="entry name" value="RimP-like superfamily, N-terminal"/>
    <property type="match status" value="1"/>
</dbReference>
<dbReference type="HAMAP" id="MF_01077">
    <property type="entry name" value="RimP"/>
    <property type="match status" value="1"/>
</dbReference>
<dbReference type="InterPro" id="IPR003728">
    <property type="entry name" value="Ribosome_maturation_RimP"/>
</dbReference>
<dbReference type="InterPro" id="IPR028998">
    <property type="entry name" value="RimP_C"/>
</dbReference>
<dbReference type="InterPro" id="IPR036847">
    <property type="entry name" value="RimP_C_sf"/>
</dbReference>
<dbReference type="InterPro" id="IPR028989">
    <property type="entry name" value="RimP_N"/>
</dbReference>
<dbReference type="InterPro" id="IPR035956">
    <property type="entry name" value="RimP_N_sf"/>
</dbReference>
<dbReference type="NCBIfam" id="NF000928">
    <property type="entry name" value="PRK00092.1-2"/>
    <property type="match status" value="1"/>
</dbReference>
<dbReference type="PANTHER" id="PTHR33867">
    <property type="entry name" value="RIBOSOME MATURATION FACTOR RIMP"/>
    <property type="match status" value="1"/>
</dbReference>
<dbReference type="PANTHER" id="PTHR33867:SF1">
    <property type="entry name" value="RIBOSOME MATURATION FACTOR RIMP"/>
    <property type="match status" value="1"/>
</dbReference>
<dbReference type="Pfam" id="PF17384">
    <property type="entry name" value="DUF150_C"/>
    <property type="match status" value="1"/>
</dbReference>
<dbReference type="Pfam" id="PF02576">
    <property type="entry name" value="RimP_N"/>
    <property type="match status" value="1"/>
</dbReference>
<dbReference type="SUPFAM" id="SSF74942">
    <property type="entry name" value="YhbC-like, C-terminal domain"/>
    <property type="match status" value="1"/>
</dbReference>
<dbReference type="SUPFAM" id="SSF75420">
    <property type="entry name" value="YhbC-like, N-terminal domain"/>
    <property type="match status" value="1"/>
</dbReference>
<evidence type="ECO:0000255" key="1">
    <source>
        <dbReference type="HAMAP-Rule" id="MF_01077"/>
    </source>
</evidence>
<name>RIMP_STAA9</name>
<gene>
    <name evidence="1" type="primary">rimP</name>
    <name type="ordered locus">SaurJH9_1325</name>
</gene>
<comment type="function">
    <text evidence="1">Required for maturation of 30S ribosomal subunits.</text>
</comment>
<comment type="subcellular location">
    <subcellularLocation>
        <location evidence="1">Cytoplasm</location>
    </subcellularLocation>
</comment>
<comment type="similarity">
    <text evidence="1">Belongs to the RimP family.</text>
</comment>
<reference key="1">
    <citation type="submission" date="2007-05" db="EMBL/GenBank/DDBJ databases">
        <title>Complete sequence of chromosome of Staphylococcus aureus subsp. aureus JH9.</title>
        <authorList>
            <consortium name="US DOE Joint Genome Institute"/>
            <person name="Copeland A."/>
            <person name="Lucas S."/>
            <person name="Lapidus A."/>
            <person name="Barry K."/>
            <person name="Detter J.C."/>
            <person name="Glavina del Rio T."/>
            <person name="Hammon N."/>
            <person name="Israni S."/>
            <person name="Pitluck S."/>
            <person name="Chain P."/>
            <person name="Malfatti S."/>
            <person name="Shin M."/>
            <person name="Vergez L."/>
            <person name="Schmutz J."/>
            <person name="Larimer F."/>
            <person name="Land M."/>
            <person name="Hauser L."/>
            <person name="Kyrpides N."/>
            <person name="Kim E."/>
            <person name="Tomasz A."/>
            <person name="Richardson P."/>
        </authorList>
    </citation>
    <scope>NUCLEOTIDE SEQUENCE [LARGE SCALE GENOMIC DNA]</scope>
    <source>
        <strain>JH9</strain>
    </source>
</reference>
<sequence length="155" mass="17627">MSKITEQVEVIVQPIMEDLNFELVDVEYVKEGRDHFLRISIDKEGGVDLNDCTLASEKISEAMDANDPIPEMYYLDVASPGAERPIKKEQDFQNAITKPVFVSLYVPIEGEKEWLGILQEVNNETIVVQVKIKARTKDIEIPRDKIAKARHAVMI</sequence>
<feature type="chain" id="PRO_1000084537" description="Ribosome maturation factor RimP">
    <location>
        <begin position="1"/>
        <end position="155"/>
    </location>
</feature>
<protein>
    <recommendedName>
        <fullName evidence="1">Ribosome maturation factor RimP</fullName>
    </recommendedName>
</protein>
<accession>A5ISE9</accession>
<organism>
    <name type="scientific">Staphylococcus aureus (strain JH9)</name>
    <dbReference type="NCBI Taxonomy" id="359786"/>
    <lineage>
        <taxon>Bacteria</taxon>
        <taxon>Bacillati</taxon>
        <taxon>Bacillota</taxon>
        <taxon>Bacilli</taxon>
        <taxon>Bacillales</taxon>
        <taxon>Staphylococcaceae</taxon>
        <taxon>Staphylococcus</taxon>
    </lineage>
</organism>
<proteinExistence type="inferred from homology"/>
<keyword id="KW-0963">Cytoplasm</keyword>
<keyword id="KW-0690">Ribosome biogenesis</keyword>